<sequence>MLRSHAAGLLREGDAGQQVTLAGWVARRRDHGGVIFIDLRDASGIAQVVFRDPQDTEVLAQAHRLRAEFCVSVAGVVEIRPEGNANPEIATGEIEVNATSLTVLGECAPLPFQLDEPAGEELRLKYRYLDLRRDDPAAAIRLRSRVNAAARAVLARHDFVEIETPTITRSTPEGARDFLVPARLHPGSFYALPQSPQLFKQLLMVAGMERYYQIARCYRDEDFRADRQPEFTQLDMEMSFVDAEDIIAISEEVLTELWALIGYRIPTPIPRIGYAEAMRRFGTDKPDLRFGLELVECTDFFSDTTFRVFQAPYVGAVVMPGGASQPRRTLDGWQDWAKQRGHRGLAYVLVAEDGTLGGPVAKNLTEAERTGLADHVGAKPGDCIFFSAGPVKSSRALLGAARVEIANRLGLIDPDAWAFVWVVDPPLFEPADEATAAGEVAVGSGAWTAVHHAFTAPKPEWEDRIESDTGSVLADAYDIVCNGHEIGGGSVRIHRRDIQERVFAVMGLDKAEAEEKFGFLLEAFMFGAPPHGGIAFGWDRTTALLAGMDSIREVIAFPKTGGGVDPLTDAPAPITAQQRKESGIDAQPKRVQQA</sequence>
<reference key="1">
    <citation type="journal article" date="2002" name="J. Bacteriol.">
        <title>Whole-genome comparison of Mycobacterium tuberculosis clinical and laboratory strains.</title>
        <authorList>
            <person name="Fleischmann R.D."/>
            <person name="Alland D."/>
            <person name="Eisen J.A."/>
            <person name="Carpenter L."/>
            <person name="White O."/>
            <person name="Peterson J.D."/>
            <person name="DeBoy R.T."/>
            <person name="Dodson R.J."/>
            <person name="Gwinn M.L."/>
            <person name="Haft D.H."/>
            <person name="Hickey E.K."/>
            <person name="Kolonay J.F."/>
            <person name="Nelson W.C."/>
            <person name="Umayam L.A."/>
            <person name="Ermolaeva M.D."/>
            <person name="Salzberg S.L."/>
            <person name="Delcher A."/>
            <person name="Utterback T.R."/>
            <person name="Weidman J.F."/>
            <person name="Khouri H.M."/>
            <person name="Gill J."/>
            <person name="Mikula A."/>
            <person name="Bishai W."/>
            <person name="Jacobs W.R. Jr."/>
            <person name="Venter J.C."/>
            <person name="Fraser C.M."/>
        </authorList>
    </citation>
    <scope>NUCLEOTIDE SEQUENCE [LARGE SCALE GENOMIC DNA]</scope>
    <source>
        <strain>CDC 1551 / Oshkosh</strain>
    </source>
</reference>
<proteinExistence type="inferred from homology"/>
<accession>P9WFW2</accession>
<accession>L0TCT5</accession>
<accession>Q50649</accession>
<keyword id="KW-0030">Aminoacyl-tRNA synthetase</keyword>
<keyword id="KW-0067">ATP-binding</keyword>
<keyword id="KW-0963">Cytoplasm</keyword>
<keyword id="KW-0436">Ligase</keyword>
<keyword id="KW-0547">Nucleotide-binding</keyword>
<keyword id="KW-0648">Protein biosynthesis</keyword>
<keyword id="KW-1185">Reference proteome</keyword>
<gene>
    <name evidence="1" type="primary">aspS</name>
    <name type="ordered locus">MT2648</name>
</gene>
<feature type="chain" id="PRO_0000428467" description="Aspartate--tRNA(Asp/Asn) ligase">
    <location>
        <begin position="1"/>
        <end position="594"/>
    </location>
</feature>
<feature type="region of interest" description="Aspartate" evidence="1">
    <location>
        <begin position="197"/>
        <end position="200"/>
    </location>
</feature>
<feature type="region of interest" description="Disordered" evidence="2">
    <location>
        <begin position="566"/>
        <end position="594"/>
    </location>
</feature>
<feature type="binding site" evidence="1">
    <location>
        <position position="173"/>
    </location>
    <ligand>
        <name>L-aspartate</name>
        <dbReference type="ChEBI" id="CHEBI:29991"/>
    </ligand>
</feature>
<feature type="binding site" evidence="1">
    <location>
        <begin position="219"/>
        <end position="221"/>
    </location>
    <ligand>
        <name>ATP</name>
        <dbReference type="ChEBI" id="CHEBI:30616"/>
    </ligand>
</feature>
<feature type="binding site" evidence="1">
    <location>
        <position position="219"/>
    </location>
    <ligand>
        <name>L-aspartate</name>
        <dbReference type="ChEBI" id="CHEBI:29991"/>
    </ligand>
</feature>
<feature type="binding site" evidence="1">
    <location>
        <position position="228"/>
    </location>
    <ligand>
        <name>ATP</name>
        <dbReference type="ChEBI" id="CHEBI:30616"/>
    </ligand>
</feature>
<feature type="binding site" evidence="1">
    <location>
        <position position="451"/>
    </location>
    <ligand>
        <name>L-aspartate</name>
        <dbReference type="ChEBI" id="CHEBI:29991"/>
    </ligand>
</feature>
<feature type="binding site" evidence="1">
    <location>
        <position position="485"/>
    </location>
    <ligand>
        <name>ATP</name>
        <dbReference type="ChEBI" id="CHEBI:30616"/>
    </ligand>
</feature>
<feature type="binding site" evidence="1">
    <location>
        <position position="492"/>
    </location>
    <ligand>
        <name>L-aspartate</name>
        <dbReference type="ChEBI" id="CHEBI:29991"/>
    </ligand>
</feature>
<feature type="binding site" evidence="1">
    <location>
        <begin position="537"/>
        <end position="540"/>
    </location>
    <ligand>
        <name>ATP</name>
        <dbReference type="ChEBI" id="CHEBI:30616"/>
    </ligand>
</feature>
<feature type="site" description="Important for tRNA non-discrimination" evidence="1">
    <location>
        <position position="31"/>
    </location>
</feature>
<feature type="site" description="Important for tRNA non-discrimination" evidence="1">
    <location>
        <position position="83"/>
    </location>
</feature>
<protein>
    <recommendedName>
        <fullName evidence="1">Aspartate--tRNA(Asp/Asn) ligase</fullName>
        <ecNumber evidence="1">6.1.1.23</ecNumber>
    </recommendedName>
    <alternativeName>
        <fullName evidence="1">Aspartyl-tRNA synthetase</fullName>
        <shortName evidence="1">AspRS</shortName>
    </alternativeName>
    <alternativeName>
        <fullName evidence="1">Non-discriminating aspartyl-tRNA synthetase</fullName>
        <shortName evidence="1">ND-AspRS</shortName>
    </alternativeName>
</protein>
<organism>
    <name type="scientific">Mycobacterium tuberculosis (strain CDC 1551 / Oshkosh)</name>
    <dbReference type="NCBI Taxonomy" id="83331"/>
    <lineage>
        <taxon>Bacteria</taxon>
        <taxon>Bacillati</taxon>
        <taxon>Actinomycetota</taxon>
        <taxon>Actinomycetes</taxon>
        <taxon>Mycobacteriales</taxon>
        <taxon>Mycobacteriaceae</taxon>
        <taxon>Mycobacterium</taxon>
        <taxon>Mycobacterium tuberculosis complex</taxon>
    </lineage>
</organism>
<name>SYDND_MYCTO</name>
<evidence type="ECO:0000255" key="1">
    <source>
        <dbReference type="HAMAP-Rule" id="MF_00044"/>
    </source>
</evidence>
<evidence type="ECO:0000256" key="2">
    <source>
        <dbReference type="SAM" id="MobiDB-lite"/>
    </source>
</evidence>
<comment type="function">
    <text evidence="1">Aspartyl-tRNA synthetase with relaxed tRNA specificity since it is able to aspartylate not only its cognate tRNA(Asp) but also tRNA(Asn). Reaction proceeds in two steps: L-aspartate is first activated by ATP to form Asp-AMP and then transferred to the acceptor end of tRNA(Asp/Asn).</text>
</comment>
<comment type="catalytic activity">
    <reaction evidence="1">
        <text>tRNA(Asx) + L-aspartate + ATP = L-aspartyl-tRNA(Asx) + AMP + diphosphate</text>
        <dbReference type="Rhea" id="RHEA:18349"/>
        <dbReference type="Rhea" id="RHEA-COMP:9710"/>
        <dbReference type="Rhea" id="RHEA-COMP:9711"/>
        <dbReference type="ChEBI" id="CHEBI:29991"/>
        <dbReference type="ChEBI" id="CHEBI:30616"/>
        <dbReference type="ChEBI" id="CHEBI:33019"/>
        <dbReference type="ChEBI" id="CHEBI:78442"/>
        <dbReference type="ChEBI" id="CHEBI:78516"/>
        <dbReference type="ChEBI" id="CHEBI:456215"/>
        <dbReference type="EC" id="6.1.1.23"/>
    </reaction>
</comment>
<comment type="subunit">
    <text evidence="1">Homodimer.</text>
</comment>
<comment type="subcellular location">
    <subcellularLocation>
        <location evidence="1">Cytoplasm</location>
    </subcellularLocation>
</comment>
<comment type="similarity">
    <text evidence="1">Belongs to the class-II aminoacyl-tRNA synthetase family. Type 1 subfamily.</text>
</comment>
<dbReference type="EC" id="6.1.1.23" evidence="1"/>
<dbReference type="EMBL" id="AE000516">
    <property type="protein sequence ID" value="AAK46961.1"/>
    <property type="molecule type" value="Genomic_DNA"/>
</dbReference>
<dbReference type="PIR" id="C70724">
    <property type="entry name" value="C70724"/>
</dbReference>
<dbReference type="SMR" id="P9WFW2"/>
<dbReference type="KEGG" id="mtc:MT2648"/>
<dbReference type="HOGENOM" id="CLU_014330_3_2_11"/>
<dbReference type="Proteomes" id="UP000001020">
    <property type="component" value="Chromosome"/>
</dbReference>
<dbReference type="GO" id="GO:0005737">
    <property type="term" value="C:cytoplasm"/>
    <property type="evidence" value="ECO:0007669"/>
    <property type="project" value="UniProtKB-SubCell"/>
</dbReference>
<dbReference type="GO" id="GO:0004815">
    <property type="term" value="F:aspartate-tRNA ligase activity"/>
    <property type="evidence" value="ECO:0007669"/>
    <property type="project" value="UniProtKB-UniRule"/>
</dbReference>
<dbReference type="GO" id="GO:0050560">
    <property type="term" value="F:aspartate-tRNA(Asn) ligase activity"/>
    <property type="evidence" value="ECO:0007669"/>
    <property type="project" value="UniProtKB-EC"/>
</dbReference>
<dbReference type="GO" id="GO:0005524">
    <property type="term" value="F:ATP binding"/>
    <property type="evidence" value="ECO:0007669"/>
    <property type="project" value="UniProtKB-UniRule"/>
</dbReference>
<dbReference type="GO" id="GO:0003676">
    <property type="term" value="F:nucleic acid binding"/>
    <property type="evidence" value="ECO:0007669"/>
    <property type="project" value="InterPro"/>
</dbReference>
<dbReference type="GO" id="GO:0006422">
    <property type="term" value="P:aspartyl-tRNA aminoacylation"/>
    <property type="evidence" value="ECO:0007669"/>
    <property type="project" value="UniProtKB-UniRule"/>
</dbReference>
<dbReference type="CDD" id="cd00777">
    <property type="entry name" value="AspRS_core"/>
    <property type="match status" value="1"/>
</dbReference>
<dbReference type="CDD" id="cd04317">
    <property type="entry name" value="EcAspRS_like_N"/>
    <property type="match status" value="1"/>
</dbReference>
<dbReference type="Gene3D" id="3.30.930.10">
    <property type="entry name" value="Bira Bifunctional Protein, Domain 2"/>
    <property type="match status" value="1"/>
</dbReference>
<dbReference type="Gene3D" id="3.30.1360.30">
    <property type="entry name" value="GAD-like domain"/>
    <property type="match status" value="1"/>
</dbReference>
<dbReference type="Gene3D" id="2.40.50.140">
    <property type="entry name" value="Nucleic acid-binding proteins"/>
    <property type="match status" value="1"/>
</dbReference>
<dbReference type="HAMAP" id="MF_00044">
    <property type="entry name" value="Asp_tRNA_synth_type1"/>
    <property type="match status" value="1"/>
</dbReference>
<dbReference type="InterPro" id="IPR004364">
    <property type="entry name" value="Aa-tRNA-synt_II"/>
</dbReference>
<dbReference type="InterPro" id="IPR006195">
    <property type="entry name" value="aa-tRNA-synth_II"/>
</dbReference>
<dbReference type="InterPro" id="IPR045864">
    <property type="entry name" value="aa-tRNA-synth_II/BPL/LPL"/>
</dbReference>
<dbReference type="InterPro" id="IPR004524">
    <property type="entry name" value="Asp-tRNA-ligase_1"/>
</dbReference>
<dbReference type="InterPro" id="IPR047089">
    <property type="entry name" value="Asp-tRNA-ligase_1_N"/>
</dbReference>
<dbReference type="InterPro" id="IPR002312">
    <property type="entry name" value="Asp/Asn-tRNA-synth_IIb"/>
</dbReference>
<dbReference type="InterPro" id="IPR047090">
    <property type="entry name" value="AspRS_core"/>
</dbReference>
<dbReference type="InterPro" id="IPR004115">
    <property type="entry name" value="GAD-like_sf"/>
</dbReference>
<dbReference type="InterPro" id="IPR029351">
    <property type="entry name" value="GAD_dom"/>
</dbReference>
<dbReference type="InterPro" id="IPR012340">
    <property type="entry name" value="NA-bd_OB-fold"/>
</dbReference>
<dbReference type="InterPro" id="IPR004365">
    <property type="entry name" value="NA-bd_OB_tRNA"/>
</dbReference>
<dbReference type="NCBIfam" id="TIGR00459">
    <property type="entry name" value="aspS_bact"/>
    <property type="match status" value="1"/>
</dbReference>
<dbReference type="NCBIfam" id="NF001750">
    <property type="entry name" value="PRK00476.1"/>
    <property type="match status" value="1"/>
</dbReference>
<dbReference type="PANTHER" id="PTHR22594:SF5">
    <property type="entry name" value="ASPARTATE--TRNA LIGASE, MITOCHONDRIAL"/>
    <property type="match status" value="1"/>
</dbReference>
<dbReference type="PANTHER" id="PTHR22594">
    <property type="entry name" value="ASPARTYL/LYSYL-TRNA SYNTHETASE"/>
    <property type="match status" value="1"/>
</dbReference>
<dbReference type="Pfam" id="PF02938">
    <property type="entry name" value="GAD"/>
    <property type="match status" value="1"/>
</dbReference>
<dbReference type="Pfam" id="PF00152">
    <property type="entry name" value="tRNA-synt_2"/>
    <property type="match status" value="1"/>
</dbReference>
<dbReference type="Pfam" id="PF01336">
    <property type="entry name" value="tRNA_anti-codon"/>
    <property type="match status" value="1"/>
</dbReference>
<dbReference type="PRINTS" id="PR01042">
    <property type="entry name" value="TRNASYNTHASP"/>
</dbReference>
<dbReference type="SUPFAM" id="SSF55681">
    <property type="entry name" value="Class II aaRS and biotin synthetases"/>
    <property type="match status" value="1"/>
</dbReference>
<dbReference type="SUPFAM" id="SSF55261">
    <property type="entry name" value="GAD domain-like"/>
    <property type="match status" value="1"/>
</dbReference>
<dbReference type="SUPFAM" id="SSF50249">
    <property type="entry name" value="Nucleic acid-binding proteins"/>
    <property type="match status" value="1"/>
</dbReference>
<dbReference type="PROSITE" id="PS50862">
    <property type="entry name" value="AA_TRNA_LIGASE_II"/>
    <property type="match status" value="1"/>
</dbReference>